<dbReference type="EC" id="1.2.1.41" evidence="1"/>
<dbReference type="EMBL" id="CP001113">
    <property type="protein sequence ID" value="ACF61967.1"/>
    <property type="molecule type" value="Genomic_DNA"/>
</dbReference>
<dbReference type="RefSeq" id="WP_000893238.1">
    <property type="nucleotide sequence ID" value="NZ_CCMR01000003.1"/>
</dbReference>
<dbReference type="SMR" id="B4SVW6"/>
<dbReference type="KEGG" id="see:SNSL254_A0363"/>
<dbReference type="HOGENOM" id="CLU_030231_0_0_6"/>
<dbReference type="UniPathway" id="UPA00098">
    <property type="reaction ID" value="UER00360"/>
</dbReference>
<dbReference type="Proteomes" id="UP000008824">
    <property type="component" value="Chromosome"/>
</dbReference>
<dbReference type="GO" id="GO:0005737">
    <property type="term" value="C:cytoplasm"/>
    <property type="evidence" value="ECO:0007669"/>
    <property type="project" value="UniProtKB-SubCell"/>
</dbReference>
<dbReference type="GO" id="GO:0004350">
    <property type="term" value="F:glutamate-5-semialdehyde dehydrogenase activity"/>
    <property type="evidence" value="ECO:0007669"/>
    <property type="project" value="UniProtKB-UniRule"/>
</dbReference>
<dbReference type="GO" id="GO:0050661">
    <property type="term" value="F:NADP binding"/>
    <property type="evidence" value="ECO:0007669"/>
    <property type="project" value="InterPro"/>
</dbReference>
<dbReference type="GO" id="GO:0055129">
    <property type="term" value="P:L-proline biosynthetic process"/>
    <property type="evidence" value="ECO:0007669"/>
    <property type="project" value="UniProtKB-UniRule"/>
</dbReference>
<dbReference type="CDD" id="cd07079">
    <property type="entry name" value="ALDH_F18-19_ProA-GPR"/>
    <property type="match status" value="1"/>
</dbReference>
<dbReference type="FunFam" id="3.40.309.10:FF:000006">
    <property type="entry name" value="Gamma-glutamyl phosphate reductase"/>
    <property type="match status" value="1"/>
</dbReference>
<dbReference type="Gene3D" id="3.40.605.10">
    <property type="entry name" value="Aldehyde Dehydrogenase, Chain A, domain 1"/>
    <property type="match status" value="1"/>
</dbReference>
<dbReference type="Gene3D" id="3.40.309.10">
    <property type="entry name" value="Aldehyde Dehydrogenase, Chain A, domain 2"/>
    <property type="match status" value="1"/>
</dbReference>
<dbReference type="HAMAP" id="MF_00412">
    <property type="entry name" value="ProA"/>
    <property type="match status" value="1"/>
</dbReference>
<dbReference type="InterPro" id="IPR016161">
    <property type="entry name" value="Ald_DH/histidinol_DH"/>
</dbReference>
<dbReference type="InterPro" id="IPR016163">
    <property type="entry name" value="Ald_DH_C"/>
</dbReference>
<dbReference type="InterPro" id="IPR016162">
    <property type="entry name" value="Ald_DH_N"/>
</dbReference>
<dbReference type="InterPro" id="IPR015590">
    <property type="entry name" value="Aldehyde_DH_dom"/>
</dbReference>
<dbReference type="InterPro" id="IPR020593">
    <property type="entry name" value="G-glutamylP_reductase_CS"/>
</dbReference>
<dbReference type="InterPro" id="IPR012134">
    <property type="entry name" value="Glu-5-SA_DH"/>
</dbReference>
<dbReference type="InterPro" id="IPR000965">
    <property type="entry name" value="GPR_dom"/>
</dbReference>
<dbReference type="NCBIfam" id="NF001221">
    <property type="entry name" value="PRK00197.1"/>
    <property type="match status" value="1"/>
</dbReference>
<dbReference type="NCBIfam" id="TIGR00407">
    <property type="entry name" value="proA"/>
    <property type="match status" value="1"/>
</dbReference>
<dbReference type="PANTHER" id="PTHR11063:SF8">
    <property type="entry name" value="DELTA-1-PYRROLINE-5-CARBOXYLATE SYNTHASE"/>
    <property type="match status" value="1"/>
</dbReference>
<dbReference type="PANTHER" id="PTHR11063">
    <property type="entry name" value="GLUTAMATE SEMIALDEHYDE DEHYDROGENASE"/>
    <property type="match status" value="1"/>
</dbReference>
<dbReference type="Pfam" id="PF00171">
    <property type="entry name" value="Aldedh"/>
    <property type="match status" value="1"/>
</dbReference>
<dbReference type="PIRSF" id="PIRSF000151">
    <property type="entry name" value="GPR"/>
    <property type="match status" value="1"/>
</dbReference>
<dbReference type="SUPFAM" id="SSF53720">
    <property type="entry name" value="ALDH-like"/>
    <property type="match status" value="1"/>
</dbReference>
<dbReference type="PROSITE" id="PS01223">
    <property type="entry name" value="PROA"/>
    <property type="match status" value="1"/>
</dbReference>
<feature type="chain" id="PRO_1000193649" description="Gamma-glutamyl phosphate reductase">
    <location>
        <begin position="1"/>
        <end position="416"/>
    </location>
</feature>
<evidence type="ECO:0000255" key="1">
    <source>
        <dbReference type="HAMAP-Rule" id="MF_00412"/>
    </source>
</evidence>
<proteinExistence type="inferred from homology"/>
<protein>
    <recommendedName>
        <fullName evidence="1">Gamma-glutamyl phosphate reductase</fullName>
        <shortName evidence="1">GPR</shortName>
        <ecNumber evidence="1">1.2.1.41</ecNumber>
    </recommendedName>
    <alternativeName>
        <fullName evidence="1">Glutamate-5-semialdehyde dehydrogenase</fullName>
    </alternativeName>
    <alternativeName>
        <fullName evidence="1">Glutamyl-gamma-semialdehyde dehydrogenase</fullName>
        <shortName evidence="1">GSA dehydrogenase</shortName>
    </alternativeName>
</protein>
<keyword id="KW-0028">Amino-acid biosynthesis</keyword>
<keyword id="KW-0963">Cytoplasm</keyword>
<keyword id="KW-0521">NADP</keyword>
<keyword id="KW-0560">Oxidoreductase</keyword>
<keyword id="KW-0641">Proline biosynthesis</keyword>
<organism>
    <name type="scientific">Salmonella newport (strain SL254)</name>
    <dbReference type="NCBI Taxonomy" id="423368"/>
    <lineage>
        <taxon>Bacteria</taxon>
        <taxon>Pseudomonadati</taxon>
        <taxon>Pseudomonadota</taxon>
        <taxon>Gammaproteobacteria</taxon>
        <taxon>Enterobacterales</taxon>
        <taxon>Enterobacteriaceae</taxon>
        <taxon>Salmonella</taxon>
    </lineage>
</organism>
<reference key="1">
    <citation type="journal article" date="2011" name="J. Bacteriol.">
        <title>Comparative genomics of 28 Salmonella enterica isolates: evidence for CRISPR-mediated adaptive sublineage evolution.</title>
        <authorList>
            <person name="Fricke W.F."/>
            <person name="Mammel M.K."/>
            <person name="McDermott P.F."/>
            <person name="Tartera C."/>
            <person name="White D.G."/>
            <person name="Leclerc J.E."/>
            <person name="Ravel J."/>
            <person name="Cebula T.A."/>
        </authorList>
    </citation>
    <scope>NUCLEOTIDE SEQUENCE [LARGE SCALE GENOMIC DNA]</scope>
    <source>
        <strain>SL254</strain>
    </source>
</reference>
<gene>
    <name evidence="1" type="primary">proA</name>
    <name type="ordered locus">SNSL254_A0363</name>
</gene>
<name>PROA_SALNS</name>
<accession>B4SVW6</accession>
<comment type="function">
    <text evidence="1">Catalyzes the NADPH-dependent reduction of L-glutamate 5-phosphate into L-glutamate 5-semialdehyde and phosphate. The product spontaneously undergoes cyclization to form 1-pyrroline-5-carboxylate.</text>
</comment>
<comment type="catalytic activity">
    <reaction evidence="1">
        <text>L-glutamate 5-semialdehyde + phosphate + NADP(+) = L-glutamyl 5-phosphate + NADPH + H(+)</text>
        <dbReference type="Rhea" id="RHEA:19541"/>
        <dbReference type="ChEBI" id="CHEBI:15378"/>
        <dbReference type="ChEBI" id="CHEBI:43474"/>
        <dbReference type="ChEBI" id="CHEBI:57783"/>
        <dbReference type="ChEBI" id="CHEBI:58066"/>
        <dbReference type="ChEBI" id="CHEBI:58274"/>
        <dbReference type="ChEBI" id="CHEBI:58349"/>
        <dbReference type="EC" id="1.2.1.41"/>
    </reaction>
</comment>
<comment type="pathway">
    <text evidence="1">Amino-acid biosynthesis; L-proline biosynthesis; L-glutamate 5-semialdehyde from L-glutamate: step 2/2.</text>
</comment>
<comment type="subcellular location">
    <subcellularLocation>
        <location evidence="1">Cytoplasm</location>
    </subcellularLocation>
</comment>
<comment type="similarity">
    <text evidence="1">Belongs to the gamma-glutamyl phosphate reductase family.</text>
</comment>
<sequence length="416" mass="44715">MLEQMGIAAKAASYKLALLSSGEKNRVLEKIADELEAQMESILSANVQDVEQARANGLSEAMLDRLTLTPARLKAIADDVRQVCNLADPVGQVIDGGLLDSGLRLERRRVPLGVVGVIYEARPNVTVDVASLCLKTGNAVILRGGKETHRTNSATVRVIQKALKACGLPEAAVQAIDNPDRSLVNEMLRMDKYIDMLIPRGGAGLHKLCREQSTIPVITGGIGVCHIFVDSSADIAPALKIIVNAKTQRPSTCNTVETLLVHQDIAERFLPALSKQMAESGVTLHGDETVMQVLHGPAKLVPLKPEELDNEFLSLDLNVVVVENMDGAITHIREHGTQHSDAILTCDMHNAARFVNEVDSAAVYVNASTRFTDGGQFGLGAEVAVSTQKLHARGPMGLEALTTYKWIGFGDGTIRA</sequence>